<protein>
    <recommendedName>
        <fullName>Protein Fer3</fullName>
    </recommendedName>
    <alternativeName>
        <fullName>Basic helix-loop-helix protein N-twist</fullName>
    </alternativeName>
    <alternativeName>
        <fullName>Nephew of atonal 3</fullName>
    </alternativeName>
    <alternativeName>
        <fullName>Neuronal twist</fullName>
    </alternativeName>
</protein>
<proteinExistence type="evidence at transcript level"/>
<accession>Q9VGJ5</accession>
<accession>A0AQE5</accession>
<feature type="chain" id="PRO_0000328681" description="Protein Fer3">
    <location>
        <begin position="1"/>
        <end position="195"/>
    </location>
</feature>
<feature type="domain" description="bHLH" evidence="2">
    <location>
        <begin position="86"/>
        <end position="138"/>
    </location>
</feature>
<feature type="region of interest" description="Disordered" evidence="3">
    <location>
        <begin position="1"/>
        <end position="24"/>
    </location>
</feature>
<feature type="region of interest" description="Disordered" evidence="3">
    <location>
        <begin position="56"/>
        <end position="82"/>
    </location>
</feature>
<feature type="region of interest" description="Disordered" evidence="3">
    <location>
        <begin position="145"/>
        <end position="175"/>
    </location>
</feature>
<feature type="compositionally biased region" description="Low complexity" evidence="3">
    <location>
        <begin position="63"/>
        <end position="75"/>
    </location>
</feature>
<feature type="sequence conflict" description="In Ref. 3; CAL26880/CAL26879/CAL26878/CAL26877/CAL26876/CAL26875/CAL26874/CAL26873/CAL26872/CAL26871/CAL26870/CAL26869." evidence="7" ref="3">
    <original>I</original>
    <variation>S</variation>
    <location>
        <position position="7"/>
    </location>
</feature>
<organism>
    <name type="scientific">Drosophila melanogaster</name>
    <name type="common">Fruit fly</name>
    <dbReference type="NCBI Taxonomy" id="7227"/>
    <lineage>
        <taxon>Eukaryota</taxon>
        <taxon>Metazoa</taxon>
        <taxon>Ecdysozoa</taxon>
        <taxon>Arthropoda</taxon>
        <taxon>Hexapoda</taxon>
        <taxon>Insecta</taxon>
        <taxon>Pterygota</taxon>
        <taxon>Neoptera</taxon>
        <taxon>Endopterygota</taxon>
        <taxon>Diptera</taxon>
        <taxon>Brachycera</taxon>
        <taxon>Muscomorpha</taxon>
        <taxon>Ephydroidea</taxon>
        <taxon>Drosophilidae</taxon>
        <taxon>Drosophila</taxon>
        <taxon>Sophophora</taxon>
    </lineage>
</organism>
<keyword id="KW-0238">DNA-binding</keyword>
<keyword id="KW-0539">Nucleus</keyword>
<keyword id="KW-1185">Reference proteome</keyword>
<keyword id="KW-0678">Repressor</keyword>
<keyword id="KW-0804">Transcription</keyword>
<keyword id="KW-0805">Transcription regulation</keyword>
<reference key="1">
    <citation type="journal article" date="2001" name="Mech. Dev.">
        <title>Nato3 is an evolutionarily conserved bHLH transcription factor expressed in the CNS of Drosophila and mouse.</title>
        <authorList>
            <person name="Segev E."/>
            <person name="Halachmi N."/>
            <person name="Salzberg A."/>
            <person name="Ben-Arie N."/>
        </authorList>
    </citation>
    <scope>NUCLEOTIDE SEQUENCE [GENOMIC DNA]</scope>
    <scope>DEVELOPMENTAL STAGE</scope>
</reference>
<reference key="2">
    <citation type="journal article" date="2002" name="Dev. Biol.">
        <title>N-twist, an evolutionarily conserved bHLH protein expressed in the developing CNS, functions as a transcriptional inhibitor.</title>
        <authorList>
            <person name="Verzi M.P."/>
            <person name="Anderson J.P."/>
            <person name="Dodou E."/>
            <person name="Kelly K.K."/>
            <person name="Greene S.B."/>
            <person name="North B.J."/>
            <person name="Cripps R.M."/>
            <person name="Black B.L."/>
        </authorList>
    </citation>
    <scope>NUCLEOTIDE SEQUENCE [MRNA]</scope>
    <scope>DEVELOPMENTAL STAGE</scope>
</reference>
<reference key="3">
    <citation type="journal article" date="2006" name="Genetics">
        <title>Widespread adaptive evolution of Drosophila genes with sex-biased expression.</title>
        <authorList>
            <person name="Proeschel M."/>
            <person name="Zhang Z."/>
            <person name="Parsch J."/>
        </authorList>
    </citation>
    <scope>NUCLEOTIDE SEQUENCE [GENOMIC DNA]</scope>
</reference>
<reference key="4">
    <citation type="journal article" date="2000" name="Science">
        <title>The genome sequence of Drosophila melanogaster.</title>
        <authorList>
            <person name="Adams M.D."/>
            <person name="Celniker S.E."/>
            <person name="Holt R.A."/>
            <person name="Evans C.A."/>
            <person name="Gocayne J.D."/>
            <person name="Amanatides P.G."/>
            <person name="Scherer S.E."/>
            <person name="Li P.W."/>
            <person name="Hoskins R.A."/>
            <person name="Galle R.F."/>
            <person name="George R.A."/>
            <person name="Lewis S.E."/>
            <person name="Richards S."/>
            <person name="Ashburner M."/>
            <person name="Henderson S.N."/>
            <person name="Sutton G.G."/>
            <person name="Wortman J.R."/>
            <person name="Yandell M.D."/>
            <person name="Zhang Q."/>
            <person name="Chen L.X."/>
            <person name="Brandon R.C."/>
            <person name="Rogers Y.-H.C."/>
            <person name="Blazej R.G."/>
            <person name="Champe M."/>
            <person name="Pfeiffer B.D."/>
            <person name="Wan K.H."/>
            <person name="Doyle C."/>
            <person name="Baxter E.G."/>
            <person name="Helt G."/>
            <person name="Nelson C.R."/>
            <person name="Miklos G.L.G."/>
            <person name="Abril J.F."/>
            <person name="Agbayani A."/>
            <person name="An H.-J."/>
            <person name="Andrews-Pfannkoch C."/>
            <person name="Baldwin D."/>
            <person name="Ballew R.M."/>
            <person name="Basu A."/>
            <person name="Baxendale J."/>
            <person name="Bayraktaroglu L."/>
            <person name="Beasley E.M."/>
            <person name="Beeson K.Y."/>
            <person name="Benos P.V."/>
            <person name="Berman B.P."/>
            <person name="Bhandari D."/>
            <person name="Bolshakov S."/>
            <person name="Borkova D."/>
            <person name="Botchan M.R."/>
            <person name="Bouck J."/>
            <person name="Brokstein P."/>
            <person name="Brottier P."/>
            <person name="Burtis K.C."/>
            <person name="Busam D.A."/>
            <person name="Butler H."/>
            <person name="Cadieu E."/>
            <person name="Center A."/>
            <person name="Chandra I."/>
            <person name="Cherry J.M."/>
            <person name="Cawley S."/>
            <person name="Dahlke C."/>
            <person name="Davenport L.B."/>
            <person name="Davies P."/>
            <person name="de Pablos B."/>
            <person name="Delcher A."/>
            <person name="Deng Z."/>
            <person name="Mays A.D."/>
            <person name="Dew I."/>
            <person name="Dietz S.M."/>
            <person name="Dodson K."/>
            <person name="Doup L.E."/>
            <person name="Downes M."/>
            <person name="Dugan-Rocha S."/>
            <person name="Dunkov B.C."/>
            <person name="Dunn P."/>
            <person name="Durbin K.J."/>
            <person name="Evangelista C.C."/>
            <person name="Ferraz C."/>
            <person name="Ferriera S."/>
            <person name="Fleischmann W."/>
            <person name="Fosler C."/>
            <person name="Gabrielian A.E."/>
            <person name="Garg N.S."/>
            <person name="Gelbart W.M."/>
            <person name="Glasser K."/>
            <person name="Glodek A."/>
            <person name="Gong F."/>
            <person name="Gorrell J.H."/>
            <person name="Gu Z."/>
            <person name="Guan P."/>
            <person name="Harris M."/>
            <person name="Harris N.L."/>
            <person name="Harvey D.A."/>
            <person name="Heiman T.J."/>
            <person name="Hernandez J.R."/>
            <person name="Houck J."/>
            <person name="Hostin D."/>
            <person name="Houston K.A."/>
            <person name="Howland T.J."/>
            <person name="Wei M.-H."/>
            <person name="Ibegwam C."/>
            <person name="Jalali M."/>
            <person name="Kalush F."/>
            <person name="Karpen G.H."/>
            <person name="Ke Z."/>
            <person name="Kennison J.A."/>
            <person name="Ketchum K.A."/>
            <person name="Kimmel B.E."/>
            <person name="Kodira C.D."/>
            <person name="Kraft C.L."/>
            <person name="Kravitz S."/>
            <person name="Kulp D."/>
            <person name="Lai Z."/>
            <person name="Lasko P."/>
            <person name="Lei Y."/>
            <person name="Levitsky A.A."/>
            <person name="Li J.H."/>
            <person name="Li Z."/>
            <person name="Liang Y."/>
            <person name="Lin X."/>
            <person name="Liu X."/>
            <person name="Mattei B."/>
            <person name="McIntosh T.C."/>
            <person name="McLeod M.P."/>
            <person name="McPherson D."/>
            <person name="Merkulov G."/>
            <person name="Milshina N.V."/>
            <person name="Mobarry C."/>
            <person name="Morris J."/>
            <person name="Moshrefi A."/>
            <person name="Mount S.M."/>
            <person name="Moy M."/>
            <person name="Murphy B."/>
            <person name="Murphy L."/>
            <person name="Muzny D.M."/>
            <person name="Nelson D.L."/>
            <person name="Nelson D.R."/>
            <person name="Nelson K.A."/>
            <person name="Nixon K."/>
            <person name="Nusskern D.R."/>
            <person name="Pacleb J.M."/>
            <person name="Palazzolo M."/>
            <person name="Pittman G.S."/>
            <person name="Pan S."/>
            <person name="Pollard J."/>
            <person name="Puri V."/>
            <person name="Reese M.G."/>
            <person name="Reinert K."/>
            <person name="Remington K."/>
            <person name="Saunders R.D.C."/>
            <person name="Scheeler F."/>
            <person name="Shen H."/>
            <person name="Shue B.C."/>
            <person name="Siden-Kiamos I."/>
            <person name="Simpson M."/>
            <person name="Skupski M.P."/>
            <person name="Smith T.J."/>
            <person name="Spier E."/>
            <person name="Spradling A.C."/>
            <person name="Stapleton M."/>
            <person name="Strong R."/>
            <person name="Sun E."/>
            <person name="Svirskas R."/>
            <person name="Tector C."/>
            <person name="Turner R."/>
            <person name="Venter E."/>
            <person name="Wang A.H."/>
            <person name="Wang X."/>
            <person name="Wang Z.-Y."/>
            <person name="Wassarman D.A."/>
            <person name="Weinstock G.M."/>
            <person name="Weissenbach J."/>
            <person name="Williams S.M."/>
            <person name="Woodage T."/>
            <person name="Worley K.C."/>
            <person name="Wu D."/>
            <person name="Yang S."/>
            <person name="Yao Q.A."/>
            <person name="Ye J."/>
            <person name="Yeh R.-F."/>
            <person name="Zaveri J.S."/>
            <person name="Zhan M."/>
            <person name="Zhang G."/>
            <person name="Zhao Q."/>
            <person name="Zheng L."/>
            <person name="Zheng X.H."/>
            <person name="Zhong F.N."/>
            <person name="Zhong W."/>
            <person name="Zhou X."/>
            <person name="Zhu S.C."/>
            <person name="Zhu X."/>
            <person name="Smith H.O."/>
            <person name="Gibbs R.A."/>
            <person name="Myers E.W."/>
            <person name="Rubin G.M."/>
            <person name="Venter J.C."/>
        </authorList>
    </citation>
    <scope>NUCLEOTIDE SEQUENCE [LARGE SCALE GENOMIC DNA]</scope>
    <source>
        <strain>Berkeley</strain>
    </source>
</reference>
<reference key="5">
    <citation type="journal article" date="2002" name="Genome Biol.">
        <title>Annotation of the Drosophila melanogaster euchromatic genome: a systematic review.</title>
        <authorList>
            <person name="Misra S."/>
            <person name="Crosby M.A."/>
            <person name="Mungall C.J."/>
            <person name="Matthews B.B."/>
            <person name="Campbell K.S."/>
            <person name="Hradecky P."/>
            <person name="Huang Y."/>
            <person name="Kaminker J.S."/>
            <person name="Millburn G.H."/>
            <person name="Prochnik S.E."/>
            <person name="Smith C.D."/>
            <person name="Tupy J.L."/>
            <person name="Whitfield E.J."/>
            <person name="Bayraktaroglu L."/>
            <person name="Berman B.P."/>
            <person name="Bettencourt B.R."/>
            <person name="Celniker S.E."/>
            <person name="de Grey A.D.N.J."/>
            <person name="Drysdale R.A."/>
            <person name="Harris N.L."/>
            <person name="Richter J."/>
            <person name="Russo S."/>
            <person name="Schroeder A.J."/>
            <person name="Shu S.Q."/>
            <person name="Stapleton M."/>
            <person name="Yamada C."/>
            <person name="Ashburner M."/>
            <person name="Gelbart W.M."/>
            <person name="Rubin G.M."/>
            <person name="Lewis S.E."/>
        </authorList>
    </citation>
    <scope>GENOME REANNOTATION</scope>
    <source>
        <strain>Berkeley</strain>
    </source>
</reference>
<reference key="6">
    <citation type="journal article" date="2002" name="Genome Biol.">
        <title>A Drosophila full-length cDNA resource.</title>
        <authorList>
            <person name="Stapleton M."/>
            <person name="Carlson J.W."/>
            <person name="Brokstein P."/>
            <person name="Yu C."/>
            <person name="Champe M."/>
            <person name="George R.A."/>
            <person name="Guarin H."/>
            <person name="Kronmiller B."/>
            <person name="Pacleb J.M."/>
            <person name="Park S."/>
            <person name="Wan K.H."/>
            <person name="Rubin G.M."/>
            <person name="Celniker S.E."/>
        </authorList>
    </citation>
    <scope>NUCLEOTIDE SEQUENCE [LARGE SCALE MRNA]</scope>
    <source>
        <strain>Berkeley</strain>
    </source>
</reference>
<reference key="7">
    <citation type="journal article" date="2000" name="Proc. Natl. Acad. Sci. U.S.A.">
        <title>A genomewide survey of basic helix-loop-helix factors in Drosophila.</title>
        <authorList>
            <person name="Moore A.W."/>
            <person name="Barbel S."/>
            <person name="Jan L.Y."/>
            <person name="Jan Y.N."/>
        </authorList>
    </citation>
    <scope>IDENTIFICATION</scope>
    <scope>DEVELOPMENTAL STAGE</scope>
</reference>
<name>FER3_DROME</name>
<dbReference type="EMBL" id="AF369898">
    <property type="protein sequence ID" value="AAK72957.1"/>
    <property type="molecule type" value="Genomic_DNA"/>
</dbReference>
<dbReference type="EMBL" id="AF517123">
    <property type="protein sequence ID" value="AAN04087.1"/>
    <property type="molecule type" value="mRNA"/>
</dbReference>
<dbReference type="EMBL" id="AM294883">
    <property type="protein sequence ID" value="CAL26869.1"/>
    <property type="molecule type" value="Genomic_DNA"/>
</dbReference>
<dbReference type="EMBL" id="AM294884">
    <property type="protein sequence ID" value="CAL26870.1"/>
    <property type="molecule type" value="Genomic_DNA"/>
</dbReference>
<dbReference type="EMBL" id="AM294885">
    <property type="protein sequence ID" value="CAL26871.1"/>
    <property type="molecule type" value="Genomic_DNA"/>
</dbReference>
<dbReference type="EMBL" id="AM294886">
    <property type="protein sequence ID" value="CAL26872.1"/>
    <property type="molecule type" value="Genomic_DNA"/>
</dbReference>
<dbReference type="EMBL" id="AM294887">
    <property type="protein sequence ID" value="CAL26873.1"/>
    <property type="molecule type" value="Genomic_DNA"/>
</dbReference>
<dbReference type="EMBL" id="AM294888">
    <property type="protein sequence ID" value="CAL26874.1"/>
    <property type="molecule type" value="Genomic_DNA"/>
</dbReference>
<dbReference type="EMBL" id="AM294889">
    <property type="protein sequence ID" value="CAL26875.1"/>
    <property type="molecule type" value="Genomic_DNA"/>
</dbReference>
<dbReference type="EMBL" id="AM294890">
    <property type="protein sequence ID" value="CAL26876.1"/>
    <property type="molecule type" value="Genomic_DNA"/>
</dbReference>
<dbReference type="EMBL" id="AM294891">
    <property type="protein sequence ID" value="CAL26877.1"/>
    <property type="molecule type" value="Genomic_DNA"/>
</dbReference>
<dbReference type="EMBL" id="AM294892">
    <property type="protein sequence ID" value="CAL26878.1"/>
    <property type="molecule type" value="Genomic_DNA"/>
</dbReference>
<dbReference type="EMBL" id="AM294893">
    <property type="protein sequence ID" value="CAL26879.1"/>
    <property type="molecule type" value="Genomic_DNA"/>
</dbReference>
<dbReference type="EMBL" id="AM294894">
    <property type="protein sequence ID" value="CAL26880.1"/>
    <property type="molecule type" value="Genomic_DNA"/>
</dbReference>
<dbReference type="EMBL" id="AE014297">
    <property type="protein sequence ID" value="AAF54684.2"/>
    <property type="molecule type" value="Genomic_DNA"/>
</dbReference>
<dbReference type="EMBL" id="AY094777">
    <property type="protein sequence ID" value="AAM11130.1"/>
    <property type="molecule type" value="mRNA"/>
</dbReference>
<dbReference type="RefSeq" id="NP_524322.1">
    <property type="nucleotide sequence ID" value="NM_079598.3"/>
</dbReference>
<dbReference type="SMR" id="Q9VGJ5"/>
<dbReference type="BioGRID" id="66537">
    <property type="interactions" value="7"/>
</dbReference>
<dbReference type="FunCoup" id="Q9VGJ5">
    <property type="interactions" value="320"/>
</dbReference>
<dbReference type="IntAct" id="Q9VGJ5">
    <property type="interactions" value="5"/>
</dbReference>
<dbReference type="STRING" id="7227.FBpp0081911"/>
<dbReference type="PaxDb" id="7227-FBpp0081911"/>
<dbReference type="DNASU" id="41411"/>
<dbReference type="EnsemblMetazoa" id="FBtr0082435">
    <property type="protein sequence ID" value="FBpp0081911"/>
    <property type="gene ID" value="FBgn0037937"/>
</dbReference>
<dbReference type="GeneID" id="41411"/>
<dbReference type="KEGG" id="dme:Dmel_CG6913"/>
<dbReference type="AGR" id="FB:FBgn0037937"/>
<dbReference type="CTD" id="41411"/>
<dbReference type="FlyBase" id="FBgn0037937">
    <property type="gene designation" value="Fer3"/>
</dbReference>
<dbReference type="VEuPathDB" id="VectorBase:FBgn0037937"/>
<dbReference type="eggNOG" id="KOG4029">
    <property type="taxonomic scope" value="Eukaryota"/>
</dbReference>
<dbReference type="GeneTree" id="ENSGT00990000206751"/>
<dbReference type="HOGENOM" id="CLU_099192_0_0_1"/>
<dbReference type="InParanoid" id="Q9VGJ5"/>
<dbReference type="OMA" id="FASPYNH"/>
<dbReference type="OrthoDB" id="6375462at2759"/>
<dbReference type="PhylomeDB" id="Q9VGJ5"/>
<dbReference type="BioGRID-ORCS" id="41411">
    <property type="hits" value="0 hits in 3 CRISPR screens"/>
</dbReference>
<dbReference type="GenomeRNAi" id="41411"/>
<dbReference type="PRO" id="PR:Q9VGJ5"/>
<dbReference type="Proteomes" id="UP000000803">
    <property type="component" value="Chromosome 3R"/>
</dbReference>
<dbReference type="Bgee" id="FBgn0037937">
    <property type="expression patterns" value="Expressed in enterocyte of anterior adult midgut epithelium in digestive tract and 10 other cell types or tissues"/>
</dbReference>
<dbReference type="ExpressionAtlas" id="Q9VGJ5">
    <property type="expression patterns" value="baseline and differential"/>
</dbReference>
<dbReference type="GO" id="GO:0005634">
    <property type="term" value="C:nucleus"/>
    <property type="evidence" value="ECO:0000250"/>
    <property type="project" value="UniProtKB"/>
</dbReference>
<dbReference type="GO" id="GO:0003700">
    <property type="term" value="F:DNA-binding transcription factor activity"/>
    <property type="evidence" value="ECO:0000250"/>
    <property type="project" value="FlyBase"/>
</dbReference>
<dbReference type="GO" id="GO:0000981">
    <property type="term" value="F:DNA-binding transcription factor activity, RNA polymerase II-specific"/>
    <property type="evidence" value="ECO:0000318"/>
    <property type="project" value="GO_Central"/>
</dbReference>
<dbReference type="GO" id="GO:0046983">
    <property type="term" value="F:protein dimerization activity"/>
    <property type="evidence" value="ECO:0007669"/>
    <property type="project" value="InterPro"/>
</dbReference>
<dbReference type="GO" id="GO:0000977">
    <property type="term" value="F:RNA polymerase II transcription regulatory region sequence-specific DNA binding"/>
    <property type="evidence" value="ECO:0000318"/>
    <property type="project" value="GO_Central"/>
</dbReference>
<dbReference type="GO" id="GO:0032502">
    <property type="term" value="P:developmental process"/>
    <property type="evidence" value="ECO:0000318"/>
    <property type="project" value="GO_Central"/>
</dbReference>
<dbReference type="GO" id="GO:0045892">
    <property type="term" value="P:negative regulation of DNA-templated transcription"/>
    <property type="evidence" value="ECO:0000250"/>
    <property type="project" value="UniProtKB"/>
</dbReference>
<dbReference type="GO" id="GO:0006355">
    <property type="term" value="P:regulation of DNA-templated transcription"/>
    <property type="evidence" value="ECO:0000250"/>
    <property type="project" value="FlyBase"/>
</dbReference>
<dbReference type="GO" id="GO:0006357">
    <property type="term" value="P:regulation of transcription by RNA polymerase II"/>
    <property type="evidence" value="ECO:0000318"/>
    <property type="project" value="GO_Central"/>
</dbReference>
<dbReference type="CDD" id="cd11415">
    <property type="entry name" value="bHLH_TS_FERD3L_NATO3"/>
    <property type="match status" value="1"/>
</dbReference>
<dbReference type="FunFam" id="4.10.280.10:FF:000035">
    <property type="entry name" value="Pancreas-specific transcription factor 1a"/>
    <property type="match status" value="1"/>
</dbReference>
<dbReference type="Gene3D" id="4.10.280.10">
    <property type="entry name" value="Helix-loop-helix DNA-binding domain"/>
    <property type="match status" value="1"/>
</dbReference>
<dbReference type="InterPro" id="IPR011598">
    <property type="entry name" value="bHLH_dom"/>
</dbReference>
<dbReference type="InterPro" id="IPR050283">
    <property type="entry name" value="E-box_TF_Regulators"/>
</dbReference>
<dbReference type="InterPro" id="IPR036638">
    <property type="entry name" value="HLH_DNA-bd_sf"/>
</dbReference>
<dbReference type="PANTHER" id="PTHR23349">
    <property type="entry name" value="BASIC HELIX-LOOP-HELIX TRANSCRIPTION FACTOR, TWIST"/>
    <property type="match status" value="1"/>
</dbReference>
<dbReference type="PANTHER" id="PTHR23349:SF63">
    <property type="entry name" value="FER3-LIKE PROTEIN"/>
    <property type="match status" value="1"/>
</dbReference>
<dbReference type="Pfam" id="PF00010">
    <property type="entry name" value="HLH"/>
    <property type="match status" value="1"/>
</dbReference>
<dbReference type="SMART" id="SM00353">
    <property type="entry name" value="HLH"/>
    <property type="match status" value="1"/>
</dbReference>
<dbReference type="SUPFAM" id="SSF47459">
    <property type="entry name" value="HLH, helix-loop-helix DNA-binding domain"/>
    <property type="match status" value="1"/>
</dbReference>
<dbReference type="PROSITE" id="PS50888">
    <property type="entry name" value="BHLH"/>
    <property type="match status" value="1"/>
</dbReference>
<gene>
    <name type="primary">fer3</name>
    <name type="synonym">Nato3</name>
    <name type="synonym">Ntwist</name>
    <name type="ORF">CG6913</name>
</gene>
<evidence type="ECO:0000250" key="1"/>
<evidence type="ECO:0000255" key="2">
    <source>
        <dbReference type="PROSITE-ProRule" id="PRU00981"/>
    </source>
</evidence>
<evidence type="ECO:0000256" key="3">
    <source>
        <dbReference type="SAM" id="MobiDB-lite"/>
    </source>
</evidence>
<evidence type="ECO:0000269" key="4">
    <source>
    </source>
</evidence>
<evidence type="ECO:0000269" key="5">
    <source>
    </source>
</evidence>
<evidence type="ECO:0000269" key="6">
    <source>
    </source>
</evidence>
<evidence type="ECO:0000305" key="7"/>
<comment type="function">
    <text evidence="1">Transcription factor that binds to the E-box and functions as inhibitor of transcription. DNA binding requires dimerization with an E protein. Inhibits transcription activation by ASCL1/MASH1 by sequestering E proteins (By similarity).</text>
</comment>
<comment type="subcellular location">
    <subcellularLocation>
        <location evidence="2">Nucleus</location>
    </subcellularLocation>
</comment>
<comment type="developmental stage">
    <text evidence="4 5 6">First detected in 6 to 9 hour old embryos. Expression is highest in 9 to 15 hour old embryos. First detected in stage 11 embryos within the neurogenic region. Detected in the procephalic region, the ventral nerve cord, subesophagal, thoracic and abdominal ganglia in stage 13 to 14 embryos. Detected in embryonic midgut primordia. Barely detectable at the first stage of larval development. Not detectable in older larvae, pupae or adults.</text>
</comment>
<sequence length="195" mass="22124">MQHPHPIDQPTYMPDVPFQPLWGQEAPPPPIVPYQELIAGFPCTDLSLWQRSQVTPLVPQRPSTNGRANGSSSSSKKTRRRVASMAQRRAANIRERRRMFNLNEAFDKLRRKVPTFAYEKRLSRIETLRLAITYIGFMAELLSGTPSNSHKSRSDVYGSMNGHHQAPPPAIHPHHLHPAAAYQRDFASPYNHSLS</sequence>